<gene>
    <name type="ordered locus">YPR203W</name>
</gene>
<name>YP203_YEAST</name>
<protein>
    <recommendedName>
        <fullName>Putative uncharacterized protein YPR203W</fullName>
    </recommendedName>
</protein>
<reference key="1">
    <citation type="journal article" date="1997" name="Nature">
        <title>The nucleotide sequence of Saccharomyces cerevisiae chromosome XVI.</title>
        <authorList>
            <person name="Bussey H."/>
            <person name="Storms R.K."/>
            <person name="Ahmed A."/>
            <person name="Albermann K."/>
            <person name="Allen E."/>
            <person name="Ansorge W."/>
            <person name="Araujo R."/>
            <person name="Aparicio A."/>
            <person name="Barrell B.G."/>
            <person name="Badcock K."/>
            <person name="Benes V."/>
            <person name="Botstein D."/>
            <person name="Bowman S."/>
            <person name="Brueckner M."/>
            <person name="Carpenter J."/>
            <person name="Cherry J.M."/>
            <person name="Chung E."/>
            <person name="Churcher C.M."/>
            <person name="Coster F."/>
            <person name="Davis K."/>
            <person name="Davis R.W."/>
            <person name="Dietrich F.S."/>
            <person name="Delius H."/>
            <person name="DiPaolo T."/>
            <person name="Dubois E."/>
            <person name="Duesterhoeft A."/>
            <person name="Duncan M."/>
            <person name="Floeth M."/>
            <person name="Fortin N."/>
            <person name="Friesen J.D."/>
            <person name="Fritz C."/>
            <person name="Goffeau A."/>
            <person name="Hall J."/>
            <person name="Hebling U."/>
            <person name="Heumann K."/>
            <person name="Hilbert H."/>
            <person name="Hillier L.W."/>
            <person name="Hunicke-Smith S."/>
            <person name="Hyman R.W."/>
            <person name="Johnston M."/>
            <person name="Kalman S."/>
            <person name="Kleine K."/>
            <person name="Komp C."/>
            <person name="Kurdi O."/>
            <person name="Lashkari D."/>
            <person name="Lew H."/>
            <person name="Lin A."/>
            <person name="Lin D."/>
            <person name="Louis E.J."/>
            <person name="Marathe R."/>
            <person name="Messenguy F."/>
            <person name="Mewes H.-W."/>
            <person name="Mirtipati S."/>
            <person name="Moestl D."/>
            <person name="Mueller-Auer S."/>
            <person name="Namath A."/>
            <person name="Nentwich U."/>
            <person name="Oefner P."/>
            <person name="Pearson D."/>
            <person name="Petel F.X."/>
            <person name="Pohl T.M."/>
            <person name="Purnelle B."/>
            <person name="Rajandream M.A."/>
            <person name="Rechmann S."/>
            <person name="Rieger M."/>
            <person name="Riles L."/>
            <person name="Roberts D."/>
            <person name="Schaefer M."/>
            <person name="Scharfe M."/>
            <person name="Scherens B."/>
            <person name="Schramm S."/>
            <person name="Schroeder M."/>
            <person name="Sdicu A.-M."/>
            <person name="Tettelin H."/>
            <person name="Urrestarazu L.A."/>
            <person name="Ushinsky S."/>
            <person name="Vierendeels F."/>
            <person name="Vissers S."/>
            <person name="Voss H."/>
            <person name="Walsh S.V."/>
            <person name="Wambutt R."/>
            <person name="Wang Y."/>
            <person name="Wedler E."/>
            <person name="Wedler H."/>
            <person name="Winnett E."/>
            <person name="Zhong W.-W."/>
            <person name="Zollner A."/>
            <person name="Vo D.H."/>
            <person name="Hani J."/>
        </authorList>
    </citation>
    <scope>NUCLEOTIDE SEQUENCE [LARGE SCALE GENOMIC DNA]</scope>
    <source>
        <strain>ATCC 204508 / S288c</strain>
    </source>
</reference>
<reference key="2">
    <citation type="journal article" date="2014" name="G3 (Bethesda)">
        <title>The reference genome sequence of Saccharomyces cerevisiae: Then and now.</title>
        <authorList>
            <person name="Engel S.R."/>
            <person name="Dietrich F.S."/>
            <person name="Fisk D.G."/>
            <person name="Binkley G."/>
            <person name="Balakrishnan R."/>
            <person name="Costanzo M.C."/>
            <person name="Dwight S.S."/>
            <person name="Hitz B.C."/>
            <person name="Karra K."/>
            <person name="Nash R.S."/>
            <person name="Weng S."/>
            <person name="Wong E.D."/>
            <person name="Lloyd P."/>
            <person name="Skrzypek M.S."/>
            <person name="Miyasato S.R."/>
            <person name="Simison M."/>
            <person name="Cherry J.M."/>
        </authorList>
    </citation>
    <scope>GENOME REANNOTATION</scope>
    <source>
        <strain>ATCC 204508 / S288c</strain>
    </source>
</reference>
<reference key="3">
    <citation type="journal article" date="2007" name="Genome Res.">
        <title>Approaching a complete repository of sequence-verified protein-encoding clones for Saccharomyces cerevisiae.</title>
        <authorList>
            <person name="Hu Y."/>
            <person name="Rolfs A."/>
            <person name="Bhullar B."/>
            <person name="Murthy T.V.S."/>
            <person name="Zhu C."/>
            <person name="Berger M.F."/>
            <person name="Camargo A.A."/>
            <person name="Kelley F."/>
            <person name="McCarron S."/>
            <person name="Jepson D."/>
            <person name="Richardson A."/>
            <person name="Raphael J."/>
            <person name="Moreira D."/>
            <person name="Taycher E."/>
            <person name="Zuo D."/>
            <person name="Mohr S."/>
            <person name="Kane M.F."/>
            <person name="Williamson J."/>
            <person name="Simpson A.J.G."/>
            <person name="Bulyk M.L."/>
            <person name="Harlow E."/>
            <person name="Marsischky G."/>
            <person name="Kolodner R.D."/>
            <person name="LaBaer J."/>
        </authorList>
    </citation>
    <scope>NUCLEOTIDE SEQUENCE [GENOMIC DNA]</scope>
    <source>
        <strain>ATCC 204508 / S288c</strain>
    </source>
</reference>
<sequence>MRTFTDFVSGAPIVRSLQKSTIRKYGYNLAPHMFLLLHVDELSIFSAYQASLPGEKKVDTERLKRDLCPRKPIEIKYFSQICNDMMNKKDRLGDVLHVCCPS</sequence>
<dbReference type="EMBL" id="Z73537">
    <property type="protein sequence ID" value="CAA97889.1"/>
    <property type="molecule type" value="Genomic_DNA"/>
</dbReference>
<dbReference type="EMBL" id="AY558050">
    <property type="protein sequence ID" value="AAS56376.1"/>
    <property type="molecule type" value="Genomic_DNA"/>
</dbReference>
<dbReference type="EMBL" id="BK006949">
    <property type="protein sequence ID" value="DAA11617.1"/>
    <property type="molecule type" value="Genomic_DNA"/>
</dbReference>
<dbReference type="PIR" id="S65340">
    <property type="entry name" value="S65340"/>
</dbReference>
<dbReference type="RefSeq" id="NP_015529.1">
    <property type="nucleotide sequence ID" value="NM_001184300.1"/>
</dbReference>
<dbReference type="SMR" id="Q08994"/>
<dbReference type="BioGRID" id="36373">
    <property type="interactions" value="4"/>
</dbReference>
<dbReference type="DIP" id="DIP-5585N"/>
<dbReference type="FunCoup" id="Q08994">
    <property type="interactions" value="22"/>
</dbReference>
<dbReference type="STRING" id="4932.YPR203W"/>
<dbReference type="PaxDb" id="4932-YPR203W"/>
<dbReference type="PeptideAtlas" id="Q08994"/>
<dbReference type="EnsemblFungi" id="YPR203W_mRNA">
    <property type="protein sequence ID" value="YPR203W"/>
    <property type="gene ID" value="YPR203W"/>
</dbReference>
<dbReference type="GeneID" id="856333"/>
<dbReference type="KEGG" id="sce:YPR203W"/>
<dbReference type="AGR" id="SGD:S000006407"/>
<dbReference type="SGD" id="S000006407">
    <property type="gene designation" value="YPR203W"/>
</dbReference>
<dbReference type="VEuPathDB" id="FungiDB:YPR203W"/>
<dbReference type="GeneTree" id="ENSGT00940000178469"/>
<dbReference type="HOGENOM" id="CLU_2279641_0_0_1"/>
<dbReference type="InParanoid" id="Q08994"/>
<dbReference type="OrthoDB" id="4037931at2759"/>
<dbReference type="BioCyc" id="YEAST:G3O-34323-MONOMER"/>
<dbReference type="Proteomes" id="UP000002311">
    <property type="component" value="Chromosome XVI"/>
</dbReference>
<dbReference type="RNAct" id="Q08994">
    <property type="molecule type" value="protein"/>
</dbReference>
<dbReference type="InterPro" id="IPR050978">
    <property type="entry name" value="Y'_ATP-dependent_helicase"/>
</dbReference>
<dbReference type="PANTHER" id="PTHR31583">
    <property type="match status" value="1"/>
</dbReference>
<dbReference type="PANTHER" id="PTHR31583:SF2">
    <property type="match status" value="1"/>
</dbReference>
<evidence type="ECO:0000305" key="1"/>
<comment type="similarity">
    <text evidence="1">Belongs to the helicase family. Yeast subtelomeric Y' repeat subfamily.</text>
</comment>
<comment type="caution">
    <text evidence="1">Could be the product of a pseudogene. Although strongly related to DNA helicases, it lacks the helicase domains, suggesting that it has no helicase activity.</text>
</comment>
<organism>
    <name type="scientific">Saccharomyces cerevisiae (strain ATCC 204508 / S288c)</name>
    <name type="common">Baker's yeast</name>
    <dbReference type="NCBI Taxonomy" id="559292"/>
    <lineage>
        <taxon>Eukaryota</taxon>
        <taxon>Fungi</taxon>
        <taxon>Dikarya</taxon>
        <taxon>Ascomycota</taxon>
        <taxon>Saccharomycotina</taxon>
        <taxon>Saccharomycetes</taxon>
        <taxon>Saccharomycetales</taxon>
        <taxon>Saccharomycetaceae</taxon>
        <taxon>Saccharomyces</taxon>
    </lineage>
</organism>
<keyword id="KW-1185">Reference proteome</keyword>
<accession>Q08994</accession>
<accession>D6W4K1</accession>
<feature type="chain" id="PRO_0000268173" description="Putative uncharacterized protein YPR203W">
    <location>
        <begin position="1"/>
        <end position="102"/>
    </location>
</feature>
<proteinExistence type="uncertain"/>